<organism>
    <name type="scientific">Bothrops diporus</name>
    <name type="common">Chaco lancehead</name>
    <name type="synonym">Bothrops neuwiedi diporus</name>
    <dbReference type="NCBI Taxonomy" id="1107943"/>
    <lineage>
        <taxon>Eukaryota</taxon>
        <taxon>Metazoa</taxon>
        <taxon>Chordata</taxon>
        <taxon>Craniata</taxon>
        <taxon>Vertebrata</taxon>
        <taxon>Euteleostomi</taxon>
        <taxon>Lepidosauria</taxon>
        <taxon>Squamata</taxon>
        <taxon>Bifurcata</taxon>
        <taxon>Unidentata</taxon>
        <taxon>Episquamata</taxon>
        <taxon>Toxicofera</taxon>
        <taxon>Serpentes</taxon>
        <taxon>Colubroidea</taxon>
        <taxon>Viperidae</taxon>
        <taxon>Crotalinae</taxon>
        <taxon>Bothrops</taxon>
    </lineage>
</organism>
<accession>C0HJP9</accession>
<sequence length="45" mass="5314">NLWQFGRVFVYPDVLCKGCYCGWGGRMDIYTYSRCCFVHDCCYGK</sequence>
<dbReference type="EC" id="3.1.1.4" evidence="3"/>
<dbReference type="SMR" id="C0HJP9"/>
<dbReference type="GO" id="GO:0005576">
    <property type="term" value="C:extracellular region"/>
    <property type="evidence" value="ECO:0007669"/>
    <property type="project" value="UniProtKB-SubCell"/>
</dbReference>
<dbReference type="GO" id="GO:0046872">
    <property type="term" value="F:metal ion binding"/>
    <property type="evidence" value="ECO:0007669"/>
    <property type="project" value="UniProtKB-KW"/>
</dbReference>
<dbReference type="GO" id="GO:0004623">
    <property type="term" value="F:phospholipase A2 activity"/>
    <property type="evidence" value="ECO:0007669"/>
    <property type="project" value="UniProtKB-EC"/>
</dbReference>
<dbReference type="GO" id="GO:0090729">
    <property type="term" value="F:toxin activity"/>
    <property type="evidence" value="ECO:0007669"/>
    <property type="project" value="UniProtKB-KW"/>
</dbReference>
<dbReference type="GO" id="GO:0050482">
    <property type="term" value="P:arachidonate secretion"/>
    <property type="evidence" value="ECO:0007669"/>
    <property type="project" value="InterPro"/>
</dbReference>
<dbReference type="GO" id="GO:0016042">
    <property type="term" value="P:lipid catabolic process"/>
    <property type="evidence" value="ECO:0007669"/>
    <property type="project" value="UniProtKB-KW"/>
</dbReference>
<dbReference type="GO" id="GO:0006644">
    <property type="term" value="P:phospholipid metabolic process"/>
    <property type="evidence" value="ECO:0007669"/>
    <property type="project" value="InterPro"/>
</dbReference>
<dbReference type="InterPro" id="IPR036444">
    <property type="entry name" value="PLipase_A2_dom_sf"/>
</dbReference>
<dbReference type="InterPro" id="IPR033113">
    <property type="entry name" value="PLipase_A2_His_AS"/>
</dbReference>
<dbReference type="SUPFAM" id="SSF48619">
    <property type="entry name" value="Phospholipase A2, PLA2"/>
    <property type="match status" value="1"/>
</dbReference>
<dbReference type="PROSITE" id="PS00118">
    <property type="entry name" value="PA2_HIS"/>
    <property type="match status" value="1"/>
</dbReference>
<comment type="function">
    <text evidence="3">PLA2 catalyzes the calcium-dependent hydrolysis of the 2-acyl groups in 3-sn-phosphoglycerides.</text>
</comment>
<comment type="catalytic activity">
    <reaction evidence="3">
        <text>a 1,2-diacyl-sn-glycero-3-phosphocholine + H2O = a 1-acyl-sn-glycero-3-phosphocholine + a fatty acid + H(+)</text>
        <dbReference type="Rhea" id="RHEA:15801"/>
        <dbReference type="ChEBI" id="CHEBI:15377"/>
        <dbReference type="ChEBI" id="CHEBI:15378"/>
        <dbReference type="ChEBI" id="CHEBI:28868"/>
        <dbReference type="ChEBI" id="CHEBI:57643"/>
        <dbReference type="ChEBI" id="CHEBI:58168"/>
        <dbReference type="EC" id="3.1.1.4"/>
    </reaction>
</comment>
<comment type="cofactor">
    <cofactor evidence="3">
        <name>Ca(2+)</name>
        <dbReference type="ChEBI" id="CHEBI:29108"/>
    </cofactor>
</comment>
<comment type="subcellular location">
    <subcellularLocation>
        <location evidence="3">Secreted</location>
    </subcellularLocation>
</comment>
<comment type="tissue specificity">
    <text evidence="6">Expressed by the venom gland.</text>
</comment>
<comment type="mass spectrometry" mass="14000.0" error="300.0" method="MALDI" evidence="3"/>
<comment type="similarity">
    <text evidence="5">Belongs to the phospholipase A2 family. Group II subfamily. D49 sub-subfamily.</text>
</comment>
<protein>
    <recommendedName>
        <fullName evidence="4">Phospholipase A2 3</fullName>
        <shortName evidence="4">BdsPLA2 III</shortName>
        <shortName>svPLA2</shortName>
        <ecNumber evidence="3">3.1.1.4</ecNumber>
    </recommendedName>
    <alternativeName>
        <fullName evidence="2">Phosphatidylcholine 2-acylhydrolase</fullName>
    </alternativeName>
</protein>
<reference key="1">
    <citation type="journal article" date="2015" name="Biochim. Biophys. Acta">
        <title>A constant area monolayer method to assess optimal lipid packing for lipolysis tested with several secreted phospholipase A2.</title>
        <authorList>
            <person name="Yunes Quartino P.J."/>
            <person name="Portela M."/>
            <person name="Lima A."/>
            <person name="Duran R."/>
            <person name="Lomonte B."/>
            <person name="Fidelio G.D."/>
        </authorList>
    </citation>
    <scope>PROTEIN SEQUENCE</scope>
    <scope>FUNCTION</scope>
    <scope>CATALYTIC ACTIVITY</scope>
    <scope>COFACTOR</scope>
    <scope>SUBCELLULAR LOCATION</scope>
    <scope>TISSUE SPECIFICITY</scope>
    <scope>MASS SPECTROMETRY</scope>
</reference>
<keyword id="KW-0106">Calcium</keyword>
<keyword id="KW-0903">Direct protein sequencing</keyword>
<keyword id="KW-1015">Disulfide bond</keyword>
<keyword id="KW-0378">Hydrolase</keyword>
<keyword id="KW-0442">Lipid degradation</keyword>
<keyword id="KW-0443">Lipid metabolism</keyword>
<keyword id="KW-0479">Metal-binding</keyword>
<keyword id="KW-0964">Secreted</keyword>
<keyword id="KW-0800">Toxin</keyword>
<name>PLA23_BOTDP</name>
<evidence type="ECO:0000250" key="1"/>
<evidence type="ECO:0000250" key="2">
    <source>
        <dbReference type="UniProtKB" id="Q8AXY1"/>
    </source>
</evidence>
<evidence type="ECO:0000269" key="3">
    <source>
    </source>
</evidence>
<evidence type="ECO:0000303" key="4">
    <source>
    </source>
</evidence>
<evidence type="ECO:0000305" key="5"/>
<evidence type="ECO:0000305" key="6">
    <source>
    </source>
</evidence>
<proteinExistence type="evidence at protein level"/>
<feature type="chain" id="PRO_0000431695" description="Phospholipase A2 3" evidence="3">
    <location>
        <begin position="1"/>
        <end position="45" status="greater than"/>
    </location>
</feature>
<feature type="active site" evidence="1">
    <location>
        <position position="39"/>
    </location>
</feature>
<feature type="binding site" evidence="2">
    <location>
        <position position="20"/>
    </location>
    <ligand>
        <name>Ca(2+)</name>
        <dbReference type="ChEBI" id="CHEBI:29108"/>
    </ligand>
</feature>
<feature type="binding site" evidence="2">
    <location>
        <position position="24"/>
    </location>
    <ligand>
        <name>Ca(2+)</name>
        <dbReference type="ChEBI" id="CHEBI:29108"/>
    </ligand>
</feature>
<feature type="binding site" evidence="2">
    <location>
        <position position="25"/>
    </location>
    <ligand>
        <name>Ca(2+)</name>
        <dbReference type="ChEBI" id="CHEBI:29108"/>
    </ligand>
</feature>
<feature type="binding site" evidence="2">
    <location>
        <position position="40"/>
    </location>
    <ligand>
        <name>Ca(2+)</name>
        <dbReference type="ChEBI" id="CHEBI:29108"/>
    </ligand>
</feature>
<feature type="disulfide bond" evidence="2">
    <location>
        <begin position="21"/>
        <end position="36"/>
    </location>
</feature>
<feature type="unsure residue" description="L or I" evidence="3">
    <location>
        <position position="2"/>
    </location>
</feature>
<feature type="unsure residue" description="L or I" evidence="3">
    <location>
        <position position="15"/>
    </location>
</feature>
<feature type="unsure residue" description="I or L" evidence="3">
    <location>
        <position position="29"/>
    </location>
</feature>
<feature type="non-consecutive residues" evidence="4">
    <location>
        <begin position="7"/>
        <end position="8"/>
    </location>
</feature>
<feature type="non-consecutive residues" evidence="4">
    <location>
        <begin position="17"/>
        <end position="18"/>
    </location>
</feature>
<feature type="non-consecutive residues" evidence="4">
    <location>
        <begin position="26"/>
        <end position="27"/>
    </location>
</feature>
<feature type="non-consecutive residues" evidence="4">
    <location>
        <begin position="34"/>
        <end position="35"/>
    </location>
</feature>
<feature type="non-terminal residue" evidence="4">
    <location>
        <position position="45"/>
    </location>
</feature>